<accession>A1W023</accession>
<dbReference type="EC" id="2.3.2.29" evidence="1"/>
<dbReference type="EMBL" id="CP000538">
    <property type="protein sequence ID" value="EAQ72215.1"/>
    <property type="molecule type" value="Genomic_DNA"/>
</dbReference>
<dbReference type="RefSeq" id="WP_002869122.1">
    <property type="nucleotide sequence ID" value="NC_008787.1"/>
</dbReference>
<dbReference type="SMR" id="A1W023"/>
<dbReference type="KEGG" id="cjj:CJJ81176_1054"/>
<dbReference type="eggNOG" id="COG2935">
    <property type="taxonomic scope" value="Bacteria"/>
</dbReference>
<dbReference type="HOGENOM" id="CLU_077607_0_0_7"/>
<dbReference type="Proteomes" id="UP000000646">
    <property type="component" value="Chromosome"/>
</dbReference>
<dbReference type="GO" id="GO:0005737">
    <property type="term" value="C:cytoplasm"/>
    <property type="evidence" value="ECO:0007669"/>
    <property type="project" value="UniProtKB-SubCell"/>
</dbReference>
<dbReference type="GO" id="GO:0004057">
    <property type="term" value="F:arginyl-tRNA--protein transferase activity"/>
    <property type="evidence" value="ECO:0007669"/>
    <property type="project" value="InterPro"/>
</dbReference>
<dbReference type="GO" id="GO:0008914">
    <property type="term" value="F:leucyl-tRNA--protein transferase activity"/>
    <property type="evidence" value="ECO:0007669"/>
    <property type="project" value="UniProtKB-UniRule"/>
</dbReference>
<dbReference type="GO" id="GO:0071596">
    <property type="term" value="P:ubiquitin-dependent protein catabolic process via the N-end rule pathway"/>
    <property type="evidence" value="ECO:0007669"/>
    <property type="project" value="InterPro"/>
</dbReference>
<dbReference type="HAMAP" id="MF_00689">
    <property type="entry name" value="Bpt"/>
    <property type="match status" value="1"/>
</dbReference>
<dbReference type="InterPro" id="IPR016181">
    <property type="entry name" value="Acyl_CoA_acyltransferase"/>
</dbReference>
<dbReference type="InterPro" id="IPR017138">
    <property type="entry name" value="Asp_Glu_LeuTrfase"/>
</dbReference>
<dbReference type="InterPro" id="IPR030700">
    <property type="entry name" value="N-end_Aminoacyl_Trfase"/>
</dbReference>
<dbReference type="InterPro" id="IPR007472">
    <property type="entry name" value="N-end_Aminoacyl_Trfase_C"/>
</dbReference>
<dbReference type="InterPro" id="IPR007471">
    <property type="entry name" value="N-end_Aminoacyl_Trfase_N"/>
</dbReference>
<dbReference type="NCBIfam" id="NF002344">
    <property type="entry name" value="PRK01305.2-1"/>
    <property type="match status" value="1"/>
</dbReference>
<dbReference type="NCBIfam" id="NF002346">
    <property type="entry name" value="PRK01305.2-3"/>
    <property type="match status" value="1"/>
</dbReference>
<dbReference type="PANTHER" id="PTHR21367">
    <property type="entry name" value="ARGININE-TRNA-PROTEIN TRANSFERASE 1"/>
    <property type="match status" value="1"/>
</dbReference>
<dbReference type="PANTHER" id="PTHR21367:SF1">
    <property type="entry name" value="ARGINYL-TRNA--PROTEIN TRANSFERASE 1"/>
    <property type="match status" value="1"/>
</dbReference>
<dbReference type="Pfam" id="PF04377">
    <property type="entry name" value="ATE_C"/>
    <property type="match status" value="1"/>
</dbReference>
<dbReference type="Pfam" id="PF04376">
    <property type="entry name" value="ATE_N"/>
    <property type="match status" value="1"/>
</dbReference>
<dbReference type="PIRSF" id="PIRSF037208">
    <property type="entry name" value="ATE_pro_prd"/>
    <property type="match status" value="1"/>
</dbReference>
<dbReference type="SUPFAM" id="SSF55729">
    <property type="entry name" value="Acyl-CoA N-acyltransferases (Nat)"/>
    <property type="match status" value="1"/>
</dbReference>
<evidence type="ECO:0000255" key="1">
    <source>
        <dbReference type="HAMAP-Rule" id="MF_00689"/>
    </source>
</evidence>
<reference key="1">
    <citation type="submission" date="2006-12" db="EMBL/GenBank/DDBJ databases">
        <authorList>
            <person name="Fouts D.E."/>
            <person name="Nelson K.E."/>
            <person name="Sebastian Y."/>
        </authorList>
    </citation>
    <scope>NUCLEOTIDE SEQUENCE [LARGE SCALE GENOMIC DNA]</scope>
    <source>
        <strain>81-176</strain>
    </source>
</reference>
<sequence length="239" mass="29005">MLEIGFCTLEDQCPYLKDKRSRIEYKYIENCSKEINNELIKRGWRRFGRYFSRPICKDCDECLSLRILVNEYNFSRSERRVVNKNINTKVILRTPNLSNEHLFLYDKYHRFMEEKKNWKRYDLSFKQYYNLYVDGFMNFGYELAFYIEDKLVCVDLIDILEDGISSIYCFYDPDFSYFSLGKFSLLNEIQIAKKMNLDYIYLGYFVKKCQSLSYKADYTPNEILKGTKELFENEVLWEK</sequence>
<keyword id="KW-0012">Acyltransferase</keyword>
<keyword id="KW-0963">Cytoplasm</keyword>
<keyword id="KW-0808">Transferase</keyword>
<organism>
    <name type="scientific">Campylobacter jejuni subsp. jejuni serotype O:23/36 (strain 81-176)</name>
    <dbReference type="NCBI Taxonomy" id="354242"/>
    <lineage>
        <taxon>Bacteria</taxon>
        <taxon>Pseudomonadati</taxon>
        <taxon>Campylobacterota</taxon>
        <taxon>Epsilonproteobacteria</taxon>
        <taxon>Campylobacterales</taxon>
        <taxon>Campylobacteraceae</taxon>
        <taxon>Campylobacter</taxon>
    </lineage>
</organism>
<comment type="function">
    <text evidence="1">Functions in the N-end rule pathway of protein degradation where it conjugates Leu from its aminoacyl-tRNA to the N-termini of proteins containing an N-terminal aspartate or glutamate.</text>
</comment>
<comment type="catalytic activity">
    <reaction evidence="1">
        <text>N-terminal L-glutamyl-[protein] + L-leucyl-tRNA(Leu) = N-terminal L-leucyl-L-glutamyl-[protein] + tRNA(Leu) + H(+)</text>
        <dbReference type="Rhea" id="RHEA:50412"/>
        <dbReference type="Rhea" id="RHEA-COMP:9613"/>
        <dbReference type="Rhea" id="RHEA-COMP:9622"/>
        <dbReference type="Rhea" id="RHEA-COMP:12664"/>
        <dbReference type="Rhea" id="RHEA-COMP:12668"/>
        <dbReference type="ChEBI" id="CHEBI:15378"/>
        <dbReference type="ChEBI" id="CHEBI:64721"/>
        <dbReference type="ChEBI" id="CHEBI:78442"/>
        <dbReference type="ChEBI" id="CHEBI:78494"/>
        <dbReference type="ChEBI" id="CHEBI:133041"/>
        <dbReference type="EC" id="2.3.2.29"/>
    </reaction>
</comment>
<comment type="catalytic activity">
    <reaction evidence="1">
        <text>N-terminal L-aspartyl-[protein] + L-leucyl-tRNA(Leu) = N-terminal L-leucyl-L-aspartyl-[protein] + tRNA(Leu) + H(+)</text>
        <dbReference type="Rhea" id="RHEA:50420"/>
        <dbReference type="Rhea" id="RHEA-COMP:9613"/>
        <dbReference type="Rhea" id="RHEA-COMP:9622"/>
        <dbReference type="Rhea" id="RHEA-COMP:12669"/>
        <dbReference type="Rhea" id="RHEA-COMP:12674"/>
        <dbReference type="ChEBI" id="CHEBI:15378"/>
        <dbReference type="ChEBI" id="CHEBI:64720"/>
        <dbReference type="ChEBI" id="CHEBI:78442"/>
        <dbReference type="ChEBI" id="CHEBI:78494"/>
        <dbReference type="ChEBI" id="CHEBI:133042"/>
        <dbReference type="EC" id="2.3.2.29"/>
    </reaction>
</comment>
<comment type="subcellular location">
    <subcellularLocation>
        <location evidence="1">Cytoplasm</location>
    </subcellularLocation>
</comment>
<comment type="similarity">
    <text evidence="1">Belongs to the R-transferase family. Bpt subfamily.</text>
</comment>
<feature type="chain" id="PRO_1000045132" description="Aspartate/glutamate leucyltransferase">
    <location>
        <begin position="1"/>
        <end position="239"/>
    </location>
</feature>
<name>BPT_CAMJJ</name>
<proteinExistence type="inferred from homology"/>
<protein>
    <recommendedName>
        <fullName evidence="1">Aspartate/glutamate leucyltransferase</fullName>
        <ecNumber evidence="1">2.3.2.29</ecNumber>
    </recommendedName>
</protein>
<gene>
    <name evidence="1" type="primary">bpt</name>
    <name type="ordered locus">CJJ81176_1054</name>
</gene>